<name>DPS_ENTCL</name>
<comment type="function">
    <text evidence="1">During stationary phase, binds the chromosome non-specifically, forming a highly ordered and stable dps-DNA co-crystal within which chromosomal DNA is condensed and protected from diverse damages. It protects DNA from oxidative damage by sequestering intracellular Fe(2+) ion and storing it in the form of Fe(3+) oxyhydroxide mineral, which can be released after reduction. One hydrogen peroxide oxidizes two Fe(2+) ions, which prevents hydroxyl radical production by the Fenton reaction.</text>
</comment>
<comment type="catalytic activity">
    <reaction evidence="1">
        <text>2 Fe(2+) + H2O2 + 2 H(+) = 2 Fe(3+) + 2 H2O</text>
        <dbReference type="Rhea" id="RHEA:48712"/>
        <dbReference type="ChEBI" id="CHEBI:15377"/>
        <dbReference type="ChEBI" id="CHEBI:15378"/>
        <dbReference type="ChEBI" id="CHEBI:16240"/>
        <dbReference type="ChEBI" id="CHEBI:29033"/>
        <dbReference type="ChEBI" id="CHEBI:29034"/>
    </reaction>
</comment>
<comment type="subunit">
    <text evidence="1">Homododecamer. The 12 subunits form a hollow sphere into which the mineral iron core of up to 500 Fe(3+) can be deposited.</text>
</comment>
<comment type="subcellular location">
    <subcellularLocation>
        <location evidence="1">Cytoplasm</location>
    </subcellularLocation>
</comment>
<comment type="similarity">
    <text evidence="1">Belongs to the Dps family.</text>
</comment>
<accession>Q84FI1</accession>
<proteinExistence type="inferred from homology"/>
<protein>
    <recommendedName>
        <fullName evidence="1">DNA protection during starvation protein</fullName>
        <ecNumber evidence="1">1.16.-.-</ecNumber>
    </recommendedName>
</protein>
<feature type="chain" id="PRO_0000271584" description="DNA protection during starvation protein">
    <location>
        <begin position="1"/>
        <end position="167"/>
    </location>
</feature>
<feature type="binding site" evidence="1">
    <location>
        <position position="51"/>
    </location>
    <ligand>
        <name>Fe cation</name>
        <dbReference type="ChEBI" id="CHEBI:24875"/>
    </ligand>
</feature>
<feature type="binding site" evidence="1">
    <location>
        <position position="78"/>
    </location>
    <ligand>
        <name>Fe cation</name>
        <dbReference type="ChEBI" id="CHEBI:24875"/>
    </ligand>
</feature>
<feature type="binding site" evidence="1">
    <location>
        <position position="82"/>
    </location>
    <ligand>
        <name>Fe cation</name>
        <dbReference type="ChEBI" id="CHEBI:24875"/>
    </ligand>
</feature>
<sequence length="167" mass="18702">MSTAKLVKSKATNLLYTRNDVSDSDKKATIELLNRQVIQFIDLSLITKQAHWNMRGANFIAVHEMLDGFRTALVTHLDTMAERAVQLGGVALGTTQVINSKTPLKSYPLDIHTVQDHLKELADRYAIVANDVRKAIGEAKDEDTADIFTAASRDLDKFLWFIESNIE</sequence>
<evidence type="ECO:0000255" key="1">
    <source>
        <dbReference type="HAMAP-Rule" id="MF_01441"/>
    </source>
</evidence>
<gene>
    <name evidence="1" type="primary">dps</name>
</gene>
<keyword id="KW-0963">Cytoplasm</keyword>
<keyword id="KW-0226">DNA condensation</keyword>
<keyword id="KW-0238">DNA-binding</keyword>
<keyword id="KW-0408">Iron</keyword>
<keyword id="KW-0409">Iron storage</keyword>
<keyword id="KW-0479">Metal-binding</keyword>
<keyword id="KW-0560">Oxidoreductase</keyword>
<organism>
    <name type="scientific">Enterobacter cloacae</name>
    <dbReference type="NCBI Taxonomy" id="550"/>
    <lineage>
        <taxon>Bacteria</taxon>
        <taxon>Pseudomonadati</taxon>
        <taxon>Pseudomonadota</taxon>
        <taxon>Gammaproteobacteria</taxon>
        <taxon>Enterobacterales</taxon>
        <taxon>Enterobacteriaceae</taxon>
        <taxon>Enterobacter</taxon>
        <taxon>Enterobacter cloacae complex</taxon>
    </lineage>
</organism>
<reference key="1">
    <citation type="journal article" date="2004" name="Appl. Environ. Microbiol.">
        <title>Culture-independent analysis of fecal enterobacteria in environmental samples by single-cell mRNA profiling.</title>
        <authorList>
            <person name="Chen H."/>
            <person name="Ponniah G."/>
            <person name="Salonen N."/>
            <person name="Blum P."/>
        </authorList>
    </citation>
    <scope>NUCLEOTIDE SEQUENCE [GENOMIC DNA]</scope>
</reference>
<dbReference type="EC" id="1.16.-.-" evidence="1"/>
<dbReference type="EMBL" id="AY195735">
    <property type="protein sequence ID" value="AAO41729.1"/>
    <property type="molecule type" value="Genomic_DNA"/>
</dbReference>
<dbReference type="SMR" id="Q84FI1"/>
<dbReference type="eggNOG" id="COG0783">
    <property type="taxonomic scope" value="Bacteria"/>
</dbReference>
<dbReference type="GO" id="GO:0005737">
    <property type="term" value="C:cytoplasm"/>
    <property type="evidence" value="ECO:0007669"/>
    <property type="project" value="UniProtKB-SubCell"/>
</dbReference>
<dbReference type="GO" id="GO:0003677">
    <property type="term" value="F:DNA binding"/>
    <property type="evidence" value="ECO:0007669"/>
    <property type="project" value="UniProtKB-UniRule"/>
</dbReference>
<dbReference type="GO" id="GO:0008199">
    <property type="term" value="F:ferric iron binding"/>
    <property type="evidence" value="ECO:0007669"/>
    <property type="project" value="UniProtKB-UniRule"/>
</dbReference>
<dbReference type="GO" id="GO:0016722">
    <property type="term" value="F:oxidoreductase activity, acting on metal ions"/>
    <property type="evidence" value="ECO:0007669"/>
    <property type="project" value="InterPro"/>
</dbReference>
<dbReference type="GO" id="GO:0030261">
    <property type="term" value="P:chromosome condensation"/>
    <property type="evidence" value="ECO:0007669"/>
    <property type="project" value="UniProtKB-KW"/>
</dbReference>
<dbReference type="GO" id="GO:0006879">
    <property type="term" value="P:intracellular iron ion homeostasis"/>
    <property type="evidence" value="ECO:0007669"/>
    <property type="project" value="UniProtKB-KW"/>
</dbReference>
<dbReference type="CDD" id="cd01043">
    <property type="entry name" value="DPS"/>
    <property type="match status" value="1"/>
</dbReference>
<dbReference type="FunFam" id="1.20.1260.10:FF:000003">
    <property type="entry name" value="DNA protection during starvation protein"/>
    <property type="match status" value="1"/>
</dbReference>
<dbReference type="Gene3D" id="1.20.1260.10">
    <property type="match status" value="1"/>
</dbReference>
<dbReference type="HAMAP" id="MF_01441">
    <property type="entry name" value="Dps"/>
    <property type="match status" value="1"/>
</dbReference>
<dbReference type="InterPro" id="IPR002177">
    <property type="entry name" value="DPS_DNA-bd"/>
</dbReference>
<dbReference type="InterPro" id="IPR023188">
    <property type="entry name" value="DPS_DNA-bd_CS"/>
</dbReference>
<dbReference type="InterPro" id="IPR023067">
    <property type="entry name" value="Dps_gammaproteobac"/>
</dbReference>
<dbReference type="InterPro" id="IPR012347">
    <property type="entry name" value="Ferritin-like"/>
</dbReference>
<dbReference type="InterPro" id="IPR009078">
    <property type="entry name" value="Ferritin-like_SF"/>
</dbReference>
<dbReference type="InterPro" id="IPR008331">
    <property type="entry name" value="Ferritin_DPS_dom"/>
</dbReference>
<dbReference type="NCBIfam" id="NF006975">
    <property type="entry name" value="PRK09448.1"/>
    <property type="match status" value="1"/>
</dbReference>
<dbReference type="PANTHER" id="PTHR42932:SF3">
    <property type="entry name" value="DNA PROTECTION DURING STARVATION PROTEIN"/>
    <property type="match status" value="1"/>
</dbReference>
<dbReference type="PANTHER" id="PTHR42932">
    <property type="entry name" value="GENERAL STRESS PROTEIN 20U"/>
    <property type="match status" value="1"/>
</dbReference>
<dbReference type="Pfam" id="PF00210">
    <property type="entry name" value="Ferritin"/>
    <property type="match status" value="1"/>
</dbReference>
<dbReference type="PIRSF" id="PIRSF005900">
    <property type="entry name" value="Dps"/>
    <property type="match status" value="1"/>
</dbReference>
<dbReference type="PRINTS" id="PR01346">
    <property type="entry name" value="HELNAPAPROT"/>
</dbReference>
<dbReference type="SUPFAM" id="SSF47240">
    <property type="entry name" value="Ferritin-like"/>
    <property type="match status" value="1"/>
</dbReference>
<dbReference type="PROSITE" id="PS00818">
    <property type="entry name" value="DPS_1"/>
    <property type="match status" value="1"/>
</dbReference>
<dbReference type="PROSITE" id="PS00819">
    <property type="entry name" value="DPS_2"/>
    <property type="match status" value="1"/>
</dbReference>